<protein>
    <recommendedName>
        <fullName>Cytochrome c oxidase subunit 5B, mitochondrial</fullName>
    </recommendedName>
    <alternativeName>
        <fullName>Cytochrome c oxidase polypeptide Vb</fullName>
    </alternativeName>
</protein>
<gene>
    <name type="primary">COX5B</name>
    <name type="ordered locus">YIL111W</name>
</gene>
<comment type="function">
    <text evidence="1">Component of the cytochrome c oxidase, the last enzyme in the mitochondrial electron transport chain which drives oxidative phosphorylation. The respiratory chain contains 3 multisubunit complexes succinate dehydrogenase (complex II, CII), ubiquinol-cytochrome c oxidoreductase (cytochrome b-c1 complex, complex III, CIII) and cytochrome c oxidase (complex IV, CIV), that cooperate to transfer electrons derived from NADH and succinate to molecular oxygen, creating an electrochemical gradient over the inner membrane that drives transmembrane transport and the ATP synthase. Cytochrome c oxidase is the component of the respiratory chain that catalyzes the reduction of oxygen to water. Electrons originating from reduced cytochrome c in the intermembrane space (IMS) are transferred via the dinuclear copper A center (CU(A)) of COX2 and heme A of COX1 to the active site in COX1, a binuclear center (BNC) formed by heme A3 and copper B (CU(B)). The BNC reduces molecular oxygen to 2 water molecules using 4 electrons from cytochrome c in the IMS and 4 protons from the mitochondrial matrix.</text>
</comment>
<comment type="pathway">
    <text>Energy metabolism; oxidative phosphorylation.</text>
</comment>
<comment type="subunit">
    <text evidence="1 3 4">Component of the cytochrome c oxidase (complex IV, CIV), a multisubunit enzyme composed of 12 subunits. The complex is composed of a catalytic core of 3 subunits COX1, COX2 and COX3, encoded in the mitochondrial DNA, and 9 supernumerary subunits COX4, COX5A (or COX5B), COX6, COX7, COX8, COX9, COX12, COX13 and COX26, which are encoded in the nuclear genome (PubMed:2986105). COX5A is the predominant subunit V during aerobic/normoxic growth, it gets replaced by COX5B under anaerobic/hypoxic conditions (PubMed:2546055). The complex exists as a monomer or a dimer and forms supercomplexes (SCs) in the inner mitochondrial membrane with a dimer of ubiquinol-cytochrome c oxidoreductase (cytochrome b-c1 complex, complex III, CIII), resulting in 2 different assemblies (supercomplexes III(2)IV and III(2)IV(2)) (By similarity).</text>
</comment>
<comment type="subcellular location">
    <subcellularLocation>
        <location evidence="4">Mitochondrion inner membrane</location>
        <topology evidence="1">Single-pass membrane protein</topology>
    </subcellularLocation>
</comment>
<comment type="induction">
    <text evidence="3 5">By low oxygen levels (hypoxia) at the level of transcription. Repressed by ROX1 in the presence of oxygen (PubMed:2546055). Not expressed until the oxygen concentration is below 0.5 uM O(2) (PubMed:9169434).</text>
</comment>
<comment type="miscellaneous">
    <text evidence="2">Present with 2250 molecules/cell in log phase SD medium.</text>
</comment>
<comment type="similarity">
    <text evidence="6">Belongs to the cytochrome c oxidase IV family.</text>
</comment>
<proteinExistence type="evidence at protein level"/>
<accession>P00425</accession>
<accession>D6VVH6</accession>
<name>COX5B_YEAST</name>
<sequence>MLRTSLTKGARLTGTRFVQTKALSKATLTDLPERWENMPNLEQKEIADNLTERQKLPWKTLNNEEIKAAWYISYGEWGPRRPVHGKGDVAFITKGVFLGLGISFGLFGLVRLLANPETPKTMNREWQLKSDEYLKSKNANPWGGYSQVQSK</sequence>
<reference key="1">
    <citation type="journal article" date="1987" name="Mol. Cell. Biol.">
        <title>Structural analysis of two genes encoding divergent forms of yeast cytochrome c oxidase subunit V.</title>
        <authorList>
            <person name="Cumsky M.G."/>
            <person name="Trueblood C.E."/>
            <person name="Ko C."/>
            <person name="Poyton R.O."/>
        </authorList>
    </citation>
    <scope>NUCLEOTIDE SEQUENCE [GENOMIC DNA]</scope>
</reference>
<reference key="2">
    <citation type="journal article" date="1997" name="Nature">
        <title>The nucleotide sequence of Saccharomyces cerevisiae chromosome IX.</title>
        <authorList>
            <person name="Churcher C.M."/>
            <person name="Bowman S."/>
            <person name="Badcock K."/>
            <person name="Bankier A.T."/>
            <person name="Brown D."/>
            <person name="Chillingworth T."/>
            <person name="Connor R."/>
            <person name="Devlin K."/>
            <person name="Gentles S."/>
            <person name="Hamlin N."/>
            <person name="Harris D.E."/>
            <person name="Horsnell T."/>
            <person name="Hunt S."/>
            <person name="Jagels K."/>
            <person name="Jones M."/>
            <person name="Lye G."/>
            <person name="Moule S."/>
            <person name="Odell C."/>
            <person name="Pearson D."/>
            <person name="Rajandream M.A."/>
            <person name="Rice P."/>
            <person name="Rowley N."/>
            <person name="Skelton J."/>
            <person name="Smith V."/>
            <person name="Walsh S.V."/>
            <person name="Whitehead S."/>
            <person name="Barrell B.G."/>
        </authorList>
    </citation>
    <scope>NUCLEOTIDE SEQUENCE [LARGE SCALE GENOMIC DNA]</scope>
    <source>
        <strain>ATCC 204508 / S288c</strain>
    </source>
</reference>
<reference key="3">
    <citation type="journal article" date="2014" name="G3 (Bethesda)">
        <title>The reference genome sequence of Saccharomyces cerevisiae: Then and now.</title>
        <authorList>
            <person name="Engel S.R."/>
            <person name="Dietrich F.S."/>
            <person name="Fisk D.G."/>
            <person name="Binkley G."/>
            <person name="Balakrishnan R."/>
            <person name="Costanzo M.C."/>
            <person name="Dwight S.S."/>
            <person name="Hitz B.C."/>
            <person name="Karra K."/>
            <person name="Nash R.S."/>
            <person name="Weng S."/>
            <person name="Wong E.D."/>
            <person name="Lloyd P."/>
            <person name="Skrzypek M.S."/>
            <person name="Miyasato S.R."/>
            <person name="Simison M."/>
            <person name="Cherry J.M."/>
        </authorList>
    </citation>
    <scope>GENOME REANNOTATION</scope>
    <source>
        <strain>ATCC 204508 / S288c</strain>
    </source>
</reference>
<reference key="4">
    <citation type="journal article" date="1989" name="Mol. Cell. Biol.">
        <title>Splicing of a yeast intron containing an unusual 5' junction sequence.</title>
        <authorList>
            <person name="Hodge M.R."/>
            <person name="Cumsky M.G."/>
        </authorList>
    </citation>
    <scope>NUCLEOTIDE SEQUENCE [GENOMIC DNA] OF 1-79</scope>
</reference>
<reference key="5">
    <citation type="journal article" date="1985" name="Proc. Natl. Acad. Sci. U.S.A.">
        <title>Two nonidentical forms of subunit V are functional in yeast cytochrome c oxidase.</title>
        <authorList>
            <person name="Cumsky M.G."/>
            <person name="Ko C."/>
            <person name="Trueblood C.E."/>
            <person name="Poyton R.O."/>
        </authorList>
    </citation>
    <scope>NUCLEOTIDE SEQUENCE [GENOMIC DNA] OF 18-85</scope>
    <scope>IDENTIFICATION IN THE CYTOCHROME C OXIDASE COMPLEX</scope>
</reference>
<reference key="6">
    <citation type="journal article" date="1989" name="Mol. Cell. Biol.">
        <title>Inverse regulation of the yeast COX5 genes by oxygen and heme.</title>
        <authorList>
            <person name="Hodge M.R."/>
            <person name="Kim G."/>
            <person name="Singh K."/>
            <person name="Cumsky M.G."/>
        </authorList>
    </citation>
    <scope>SUBUNIT</scope>
</reference>
<reference key="7">
    <citation type="journal article" date="1997" name="J. Biol. Chem.">
        <title>Effects of oxygen concentration on the expression of cytochrome c and cytochrome c oxidase genes in yeast.</title>
        <authorList>
            <person name="Burke P.V."/>
            <person name="Raitt D.C."/>
            <person name="Allen L.A."/>
            <person name="Kellogg E.A."/>
            <person name="Poyton R.O."/>
        </authorList>
    </citation>
    <scope>INDUCTION</scope>
</reference>
<reference key="8">
    <citation type="journal article" date="2003" name="Nature">
        <title>Global analysis of protein expression in yeast.</title>
        <authorList>
            <person name="Ghaemmaghami S."/>
            <person name="Huh W.-K."/>
            <person name="Bower K."/>
            <person name="Howson R.W."/>
            <person name="Belle A."/>
            <person name="Dephoure N."/>
            <person name="O'Shea E.K."/>
            <person name="Weissman J.S."/>
        </authorList>
    </citation>
    <scope>LEVEL OF PROTEIN EXPRESSION [LARGE SCALE ANALYSIS]</scope>
</reference>
<dbReference type="EMBL" id="Z38125">
    <property type="protein sequence ID" value="CAA86269.1"/>
    <property type="molecule type" value="Genomic_DNA"/>
</dbReference>
<dbReference type="EMBL" id="M17799">
    <property type="protein sequence ID" value="AAA96310.1"/>
    <property type="molecule type" value="Genomic_DNA"/>
</dbReference>
<dbReference type="EMBL" id="M11140">
    <property type="protein sequence ID" value="AAA34521.1"/>
    <property type="molecule type" value="Genomic_DNA"/>
</dbReference>
<dbReference type="EMBL" id="BK006942">
    <property type="protein sequence ID" value="DAA08442.1"/>
    <property type="molecule type" value="Genomic_DNA"/>
</dbReference>
<dbReference type="PIR" id="S05755">
    <property type="entry name" value="OTBY5B"/>
</dbReference>
<dbReference type="RefSeq" id="NP_012155.1">
    <property type="nucleotide sequence ID" value="NM_001179459.1"/>
</dbReference>
<dbReference type="PDB" id="6T0B">
    <property type="method" value="EM"/>
    <property type="resolution" value="2.80 A"/>
    <property type="chains" value="e/r=18-151"/>
</dbReference>
<dbReference type="PDB" id="6T15">
    <property type="method" value="EM"/>
    <property type="resolution" value="3.29 A"/>
    <property type="chains" value="e=18-151"/>
</dbReference>
<dbReference type="PDBsum" id="6T0B"/>
<dbReference type="PDBsum" id="6T15"/>
<dbReference type="EMDB" id="EMD-10318"/>
<dbReference type="EMDB" id="EMD-10334"/>
<dbReference type="EMDB" id="EMD-10335"/>
<dbReference type="EMDB" id="EMD-10340"/>
<dbReference type="SMR" id="P00425"/>
<dbReference type="BioGRID" id="34880">
    <property type="interactions" value="81"/>
</dbReference>
<dbReference type="ComplexPortal" id="CPX-1722">
    <property type="entry name" value="Mitochondrial respiratory chain complex IV, COX5B variant"/>
</dbReference>
<dbReference type="DIP" id="DIP-4709N"/>
<dbReference type="FunCoup" id="P00425">
    <property type="interactions" value="134"/>
</dbReference>
<dbReference type="IntAct" id="P00425">
    <property type="interactions" value="24"/>
</dbReference>
<dbReference type="MINT" id="P00425"/>
<dbReference type="STRING" id="4932.YIL111W"/>
<dbReference type="TCDB" id="3.D.4.8.1">
    <property type="family name" value="the proton-translocating cytochrome oxidase (cox) superfamily"/>
</dbReference>
<dbReference type="iPTMnet" id="P00425"/>
<dbReference type="PaxDb" id="4932-YIL111W"/>
<dbReference type="PeptideAtlas" id="P00425"/>
<dbReference type="GeneID" id="854695"/>
<dbReference type="KEGG" id="sce:YIL111W"/>
<dbReference type="AGR" id="SGD:S000001373"/>
<dbReference type="SGD" id="S000001373">
    <property type="gene designation" value="COX5B"/>
</dbReference>
<dbReference type="VEuPathDB" id="FungiDB:YIL111W"/>
<dbReference type="eggNOG" id="KOG4075">
    <property type="taxonomic scope" value="Eukaryota"/>
</dbReference>
<dbReference type="HOGENOM" id="CLU_070101_2_0_1"/>
<dbReference type="InParanoid" id="P00425"/>
<dbReference type="OrthoDB" id="186013at2759"/>
<dbReference type="BioCyc" id="YEAST:YIL111W-MONOMER"/>
<dbReference type="UniPathway" id="UPA00705"/>
<dbReference type="BioGRID-ORCS" id="854695">
    <property type="hits" value="0 hits in 10 CRISPR screens"/>
</dbReference>
<dbReference type="PRO" id="PR:P00425"/>
<dbReference type="Proteomes" id="UP000002311">
    <property type="component" value="Chromosome IX"/>
</dbReference>
<dbReference type="RNAct" id="P00425">
    <property type="molecule type" value="protein"/>
</dbReference>
<dbReference type="GO" id="GO:0005743">
    <property type="term" value="C:mitochondrial inner membrane"/>
    <property type="evidence" value="ECO:0007669"/>
    <property type="project" value="UniProtKB-SubCell"/>
</dbReference>
<dbReference type="GO" id="GO:0005739">
    <property type="term" value="C:mitochondrion"/>
    <property type="evidence" value="ECO:0007005"/>
    <property type="project" value="SGD"/>
</dbReference>
<dbReference type="GO" id="GO:0045277">
    <property type="term" value="C:respiratory chain complex IV"/>
    <property type="evidence" value="ECO:0000314"/>
    <property type="project" value="SGD"/>
</dbReference>
<dbReference type="GO" id="GO:0016491">
    <property type="term" value="F:oxidoreductase activity"/>
    <property type="evidence" value="ECO:0007669"/>
    <property type="project" value="UniProtKB-KW"/>
</dbReference>
<dbReference type="GO" id="GO:0006123">
    <property type="term" value="P:mitochondrial electron transport, cytochrome c to oxygen"/>
    <property type="evidence" value="ECO:0000314"/>
    <property type="project" value="SGD"/>
</dbReference>
<dbReference type="GO" id="GO:1902600">
    <property type="term" value="P:proton transmembrane transport"/>
    <property type="evidence" value="ECO:0007669"/>
    <property type="project" value="GOC"/>
</dbReference>
<dbReference type="CDD" id="cd00922">
    <property type="entry name" value="Cyt_c_Oxidase_IV"/>
    <property type="match status" value="1"/>
</dbReference>
<dbReference type="FunFam" id="1.10.442.10:FF:000002">
    <property type="entry name" value="Cytochrome c oxidase subunit V"/>
    <property type="match status" value="1"/>
</dbReference>
<dbReference type="Gene3D" id="1.10.442.10">
    <property type="entry name" value="Cytochrome c oxidase subunit IV"/>
    <property type="match status" value="1"/>
</dbReference>
<dbReference type="InterPro" id="IPR004203">
    <property type="entry name" value="Cyt_c_oxidase_su4_fam"/>
</dbReference>
<dbReference type="InterPro" id="IPR036639">
    <property type="entry name" value="Cyt_c_oxidase_su4_sf"/>
</dbReference>
<dbReference type="PANTHER" id="PTHR10707:SF10">
    <property type="entry name" value="CYTOCHROME C OXIDASE SUBUNIT 4"/>
    <property type="match status" value="1"/>
</dbReference>
<dbReference type="PANTHER" id="PTHR10707">
    <property type="entry name" value="CYTOCHROME C OXIDASE SUBUNIT IV"/>
    <property type="match status" value="1"/>
</dbReference>
<dbReference type="Pfam" id="PF02936">
    <property type="entry name" value="COX4"/>
    <property type="match status" value="1"/>
</dbReference>
<dbReference type="SUPFAM" id="SSF81406">
    <property type="entry name" value="Mitochondrial cytochrome c oxidase subunit IV"/>
    <property type="match status" value="1"/>
</dbReference>
<evidence type="ECO:0000250" key="1">
    <source>
        <dbReference type="UniProtKB" id="P00424"/>
    </source>
</evidence>
<evidence type="ECO:0000269" key="2">
    <source>
    </source>
</evidence>
<evidence type="ECO:0000269" key="3">
    <source>
    </source>
</evidence>
<evidence type="ECO:0000269" key="4">
    <source>
    </source>
</evidence>
<evidence type="ECO:0000269" key="5">
    <source>
    </source>
</evidence>
<evidence type="ECO:0000305" key="6"/>
<evidence type="ECO:0007829" key="7">
    <source>
        <dbReference type="PDB" id="6T0B"/>
    </source>
</evidence>
<evidence type="ECO:0007829" key="8">
    <source>
        <dbReference type="PDB" id="6T15"/>
    </source>
</evidence>
<organism>
    <name type="scientific">Saccharomyces cerevisiae (strain ATCC 204508 / S288c)</name>
    <name type="common">Baker's yeast</name>
    <dbReference type="NCBI Taxonomy" id="559292"/>
    <lineage>
        <taxon>Eukaryota</taxon>
        <taxon>Fungi</taxon>
        <taxon>Dikarya</taxon>
        <taxon>Ascomycota</taxon>
        <taxon>Saccharomycotina</taxon>
        <taxon>Saccharomycetes</taxon>
        <taxon>Saccharomycetales</taxon>
        <taxon>Saccharomycetaceae</taxon>
        <taxon>Saccharomyces</taxon>
    </lineage>
</organism>
<keyword id="KW-0002">3D-structure</keyword>
<keyword id="KW-0472">Membrane</keyword>
<keyword id="KW-0496">Mitochondrion</keyword>
<keyword id="KW-0999">Mitochondrion inner membrane</keyword>
<keyword id="KW-0560">Oxidoreductase</keyword>
<keyword id="KW-1185">Reference proteome</keyword>
<keyword id="KW-0809">Transit peptide</keyword>
<keyword id="KW-0812">Transmembrane</keyword>
<keyword id="KW-1133">Transmembrane helix</keyword>
<feature type="transit peptide" description="Mitochondrion" evidence="1">
    <location>
        <begin position="1"/>
        <end position="17"/>
    </location>
</feature>
<feature type="chain" id="PRO_0000006098" description="Cytochrome c oxidase subunit 5B, mitochondrial">
    <location>
        <begin position="18"/>
        <end position="151"/>
    </location>
</feature>
<feature type="topological domain" description="Mitochondrial matrix" evidence="1">
    <location>
        <begin position="18"/>
        <end position="85"/>
    </location>
</feature>
<feature type="transmembrane region" description="Helical" evidence="1">
    <location>
        <begin position="86"/>
        <end position="108"/>
    </location>
</feature>
<feature type="topological domain" description="Mitochondrial intermembrane" evidence="1">
    <location>
        <begin position="109"/>
        <end position="151"/>
    </location>
</feature>
<feature type="helix" evidence="7">
    <location>
        <begin position="25"/>
        <end position="27"/>
    </location>
</feature>
<feature type="helix" evidence="7">
    <location>
        <begin position="31"/>
        <end position="34"/>
    </location>
</feature>
<feature type="strand" evidence="7">
    <location>
        <begin position="35"/>
        <end position="38"/>
    </location>
</feature>
<feature type="helix" evidence="7">
    <location>
        <begin position="44"/>
        <end position="53"/>
    </location>
</feature>
<feature type="helix" evidence="8">
    <location>
        <begin position="58"/>
        <end position="60"/>
    </location>
</feature>
<feature type="helix" evidence="7">
    <location>
        <begin position="63"/>
        <end position="74"/>
    </location>
</feature>
<feature type="strand" evidence="7">
    <location>
        <begin position="75"/>
        <end position="77"/>
    </location>
</feature>
<feature type="helix" evidence="7">
    <location>
        <begin position="78"/>
        <end position="80"/>
    </location>
</feature>
<feature type="helix" evidence="7">
    <location>
        <begin position="89"/>
        <end position="110"/>
    </location>
</feature>
<feature type="helix" evidence="7">
    <location>
        <begin position="124"/>
        <end position="136"/>
    </location>
</feature>
<feature type="strand" evidence="7">
    <location>
        <begin position="141"/>
        <end position="143"/>
    </location>
</feature>